<comment type="function">
    <text evidence="1">Endonuclease that specifically degrades the RNA of RNA-DNA hybrids.</text>
</comment>
<comment type="catalytic activity">
    <reaction evidence="1">
        <text>Endonucleolytic cleavage to 5'-phosphomonoester.</text>
        <dbReference type="EC" id="3.1.26.4"/>
    </reaction>
</comment>
<comment type="cofactor">
    <cofactor evidence="1">
        <name>Mn(2+)</name>
        <dbReference type="ChEBI" id="CHEBI:29035"/>
    </cofactor>
    <cofactor evidence="1">
        <name>Mg(2+)</name>
        <dbReference type="ChEBI" id="CHEBI:18420"/>
    </cofactor>
    <text evidence="1">Manganese or magnesium. Binds 1 divalent metal ion per monomer in the absence of substrate. May bind a second metal ion after substrate binding.</text>
</comment>
<comment type="subcellular location">
    <subcellularLocation>
        <location evidence="1">Cytoplasm</location>
    </subcellularLocation>
</comment>
<comment type="similarity">
    <text evidence="1">Belongs to the RNase HII family. RnhC subfamily.</text>
</comment>
<dbReference type="EC" id="3.1.26.4" evidence="1"/>
<dbReference type="EMBL" id="CP000260">
    <property type="protein sequence ID" value="ABF34696.1"/>
    <property type="molecule type" value="Genomic_DNA"/>
</dbReference>
<dbReference type="SMR" id="Q1JF63"/>
<dbReference type="KEGG" id="sph:MGAS10270_Spy1631"/>
<dbReference type="HOGENOM" id="CLU_059546_1_0_9"/>
<dbReference type="Proteomes" id="UP000002436">
    <property type="component" value="Chromosome"/>
</dbReference>
<dbReference type="GO" id="GO:0005737">
    <property type="term" value="C:cytoplasm"/>
    <property type="evidence" value="ECO:0007669"/>
    <property type="project" value="UniProtKB-SubCell"/>
</dbReference>
<dbReference type="GO" id="GO:0032299">
    <property type="term" value="C:ribonuclease H2 complex"/>
    <property type="evidence" value="ECO:0007669"/>
    <property type="project" value="TreeGrafter"/>
</dbReference>
<dbReference type="GO" id="GO:0000287">
    <property type="term" value="F:magnesium ion binding"/>
    <property type="evidence" value="ECO:0007669"/>
    <property type="project" value="UniProtKB-UniRule"/>
</dbReference>
<dbReference type="GO" id="GO:0003723">
    <property type="term" value="F:RNA binding"/>
    <property type="evidence" value="ECO:0007669"/>
    <property type="project" value="InterPro"/>
</dbReference>
<dbReference type="GO" id="GO:0004523">
    <property type="term" value="F:RNA-DNA hybrid ribonuclease activity"/>
    <property type="evidence" value="ECO:0007669"/>
    <property type="project" value="UniProtKB-UniRule"/>
</dbReference>
<dbReference type="GO" id="GO:0043137">
    <property type="term" value="P:DNA replication, removal of RNA primer"/>
    <property type="evidence" value="ECO:0007669"/>
    <property type="project" value="TreeGrafter"/>
</dbReference>
<dbReference type="GO" id="GO:0006298">
    <property type="term" value="P:mismatch repair"/>
    <property type="evidence" value="ECO:0007669"/>
    <property type="project" value="TreeGrafter"/>
</dbReference>
<dbReference type="CDD" id="cd06590">
    <property type="entry name" value="RNase_HII_bacteria_HIII_like"/>
    <property type="match status" value="1"/>
</dbReference>
<dbReference type="CDD" id="cd14796">
    <property type="entry name" value="RNAse_HIII_N"/>
    <property type="match status" value="1"/>
</dbReference>
<dbReference type="FunFam" id="3.30.420.10:FF:000047">
    <property type="entry name" value="Ribonuclease HIII"/>
    <property type="match status" value="1"/>
</dbReference>
<dbReference type="Gene3D" id="3.30.420.10">
    <property type="entry name" value="Ribonuclease H-like superfamily/Ribonuclease H"/>
    <property type="match status" value="1"/>
</dbReference>
<dbReference type="Gene3D" id="3.30.310.10">
    <property type="entry name" value="TATA-Binding Protein"/>
    <property type="match status" value="1"/>
</dbReference>
<dbReference type="HAMAP" id="MF_00053">
    <property type="entry name" value="RNase_HIII"/>
    <property type="match status" value="1"/>
</dbReference>
<dbReference type="InterPro" id="IPR001352">
    <property type="entry name" value="RNase_HII/HIII"/>
</dbReference>
<dbReference type="InterPro" id="IPR024567">
    <property type="entry name" value="RNase_HII/HIII_dom"/>
</dbReference>
<dbReference type="InterPro" id="IPR004641">
    <property type="entry name" value="RNase_HIII"/>
</dbReference>
<dbReference type="InterPro" id="IPR024568">
    <property type="entry name" value="RNase_HIII_N"/>
</dbReference>
<dbReference type="InterPro" id="IPR012337">
    <property type="entry name" value="RNaseH-like_sf"/>
</dbReference>
<dbReference type="InterPro" id="IPR036397">
    <property type="entry name" value="RNaseH_sf"/>
</dbReference>
<dbReference type="InterPro" id="IPR012295">
    <property type="entry name" value="TBP_dom_sf"/>
</dbReference>
<dbReference type="NCBIfam" id="TIGR00716">
    <property type="entry name" value="rnhC"/>
    <property type="match status" value="1"/>
</dbReference>
<dbReference type="PANTHER" id="PTHR10954:SF23">
    <property type="entry name" value="RIBONUCLEASE"/>
    <property type="match status" value="1"/>
</dbReference>
<dbReference type="PANTHER" id="PTHR10954">
    <property type="entry name" value="RIBONUCLEASE H2 SUBUNIT A"/>
    <property type="match status" value="1"/>
</dbReference>
<dbReference type="Pfam" id="PF11858">
    <property type="entry name" value="DUF3378"/>
    <property type="match status" value="1"/>
</dbReference>
<dbReference type="Pfam" id="PF01351">
    <property type="entry name" value="RNase_HII"/>
    <property type="match status" value="1"/>
</dbReference>
<dbReference type="PIRSF" id="PIRSF037748">
    <property type="entry name" value="RnhC"/>
    <property type="match status" value="1"/>
</dbReference>
<dbReference type="SUPFAM" id="SSF53098">
    <property type="entry name" value="Ribonuclease H-like"/>
    <property type="match status" value="1"/>
</dbReference>
<dbReference type="PROSITE" id="PS51975">
    <property type="entry name" value="RNASE_H_2"/>
    <property type="match status" value="1"/>
</dbReference>
<feature type="chain" id="PRO_1000031245" description="Ribonuclease HIII">
    <location>
        <begin position="1"/>
        <end position="300"/>
    </location>
</feature>
<feature type="domain" description="RNase H type-2" evidence="2">
    <location>
        <begin position="83"/>
        <end position="300"/>
    </location>
</feature>
<feature type="binding site" evidence="1">
    <location>
        <position position="89"/>
    </location>
    <ligand>
        <name>a divalent metal cation</name>
        <dbReference type="ChEBI" id="CHEBI:60240"/>
    </ligand>
</feature>
<feature type="binding site" evidence="1">
    <location>
        <position position="90"/>
    </location>
    <ligand>
        <name>a divalent metal cation</name>
        <dbReference type="ChEBI" id="CHEBI:60240"/>
    </ligand>
</feature>
<feature type="binding site" evidence="1">
    <location>
        <position position="194"/>
    </location>
    <ligand>
        <name>a divalent metal cation</name>
        <dbReference type="ChEBI" id="CHEBI:60240"/>
    </ligand>
</feature>
<protein>
    <recommendedName>
        <fullName evidence="1">Ribonuclease HIII</fullName>
        <shortName evidence="1">RNase HIII</shortName>
        <ecNumber evidence="1">3.1.26.4</ecNumber>
    </recommendedName>
</protein>
<reference key="1">
    <citation type="journal article" date="2006" name="Proc. Natl. Acad. Sci. U.S.A.">
        <title>Molecular genetic anatomy of inter- and intraserotype variation in the human bacterial pathogen group A Streptococcus.</title>
        <authorList>
            <person name="Beres S.B."/>
            <person name="Richter E.W."/>
            <person name="Nagiec M.J."/>
            <person name="Sumby P."/>
            <person name="Porcella S.F."/>
            <person name="DeLeo F.R."/>
            <person name="Musser J.M."/>
        </authorList>
    </citation>
    <scope>NUCLEOTIDE SEQUENCE [LARGE SCALE GENOMIC DNA]</scope>
    <source>
        <strain>MGAS10270</strain>
    </source>
</reference>
<evidence type="ECO:0000255" key="1">
    <source>
        <dbReference type="HAMAP-Rule" id="MF_00053"/>
    </source>
</evidence>
<evidence type="ECO:0000255" key="2">
    <source>
        <dbReference type="PROSITE-ProRule" id="PRU01319"/>
    </source>
</evidence>
<organism>
    <name type="scientific">Streptococcus pyogenes serotype M2 (strain MGAS10270)</name>
    <dbReference type="NCBI Taxonomy" id="370552"/>
    <lineage>
        <taxon>Bacteria</taxon>
        <taxon>Bacillati</taxon>
        <taxon>Bacillota</taxon>
        <taxon>Bacilli</taxon>
        <taxon>Lactobacillales</taxon>
        <taxon>Streptococcaceae</taxon>
        <taxon>Streptococcus</taxon>
    </lineage>
</organism>
<accession>Q1JF63</accession>
<sequence length="300" mass="32665">MNTLVLKIDAILSKHLKKQLAPYTISSQNTYVAFAAKKNGVTVLLYKSGKLVLQGNGANALAQELNLPVAKTVFEASNNSQDIPIIGSDEVGNGSYFGGIAVVASFVDPKDHPFLKKLGVDDSKKLSDKTIQQIAPLLEKQIPHQSLLLSPKKYNELVGKSKPYNAISIKVALHNQAIFLLLQKGIQPKQIVIDAFTSQSNYEKHLKKEKNHFPNPLTFQEKAESHYLAVAVSSIIARNLFLDNLDQLGQDLGYQLPSGAGSASDKVASQLLAAYGMSSLEYSAKLHFANTHKAQALLTK</sequence>
<name>RNH3_STRPD</name>
<gene>
    <name evidence="1" type="primary">rnhC</name>
    <name type="ordered locus">MGAS10270_Spy1631</name>
</gene>
<keyword id="KW-0963">Cytoplasm</keyword>
<keyword id="KW-0255">Endonuclease</keyword>
<keyword id="KW-0378">Hydrolase</keyword>
<keyword id="KW-0460">Magnesium</keyword>
<keyword id="KW-0479">Metal-binding</keyword>
<keyword id="KW-0540">Nuclease</keyword>
<proteinExistence type="inferred from homology"/>